<comment type="function">
    <text evidence="5">Odorant receptor.</text>
</comment>
<comment type="subcellular location">
    <subcellularLocation>
        <location>Cell membrane</location>
        <topology>Multi-pass membrane protein</topology>
    </subcellularLocation>
</comment>
<comment type="similarity">
    <text evidence="2">Belongs to the G-protein coupled receptor 1 family.</text>
</comment>
<comment type="online information" name="Human Olfactory Receptor Data Exploratorium (HORDE)">
    <link uri="http://genome.weizmann.ac.il/horde/card/index/symbol:OR5B12"/>
</comment>
<evidence type="ECO:0000255" key="1"/>
<evidence type="ECO:0000255" key="2">
    <source>
        <dbReference type="PROSITE-ProRule" id="PRU00521"/>
    </source>
</evidence>
<evidence type="ECO:0000269" key="3">
    <source>
    </source>
</evidence>
<evidence type="ECO:0000269" key="4">
    <source ref="2"/>
</evidence>
<evidence type="ECO:0000305" key="5"/>
<reference key="1">
    <citation type="submission" date="2001-07" db="EMBL/GenBank/DDBJ databases">
        <title>Genome-wide discovery and analysis of human seven transmembrane helix receptor genes.</title>
        <authorList>
            <person name="Suwa M."/>
            <person name="Sato T."/>
            <person name="Okouchi I."/>
            <person name="Arita M."/>
            <person name="Futami K."/>
            <person name="Matsumoto S."/>
            <person name="Tsutsumi S."/>
            <person name="Aburatani H."/>
            <person name="Asai K."/>
            <person name="Akiyama Y."/>
        </authorList>
    </citation>
    <scope>NUCLEOTIDE SEQUENCE [GENOMIC DNA]</scope>
</reference>
<reference key="2">
    <citation type="submission" date="2005-07" db="EMBL/GenBank/DDBJ databases">
        <authorList>
            <person name="Mural R.J."/>
            <person name="Istrail S."/>
            <person name="Sutton G.G."/>
            <person name="Florea L."/>
            <person name="Halpern A.L."/>
            <person name="Mobarry C.M."/>
            <person name="Lippert R."/>
            <person name="Walenz B."/>
            <person name="Shatkay H."/>
            <person name="Dew I."/>
            <person name="Miller J.R."/>
            <person name="Flanigan M.J."/>
            <person name="Edwards N.J."/>
            <person name="Bolanos R."/>
            <person name="Fasulo D."/>
            <person name="Halldorsson B.V."/>
            <person name="Hannenhalli S."/>
            <person name="Turner R."/>
            <person name="Yooseph S."/>
            <person name="Lu F."/>
            <person name="Nusskern D.R."/>
            <person name="Shue B.C."/>
            <person name="Zheng X.H."/>
            <person name="Zhong F."/>
            <person name="Delcher A.L."/>
            <person name="Huson D.H."/>
            <person name="Kravitz S.A."/>
            <person name="Mouchard L."/>
            <person name="Reinert K."/>
            <person name="Remington K.A."/>
            <person name="Clark A.G."/>
            <person name="Waterman M.S."/>
            <person name="Eichler E.E."/>
            <person name="Adams M.D."/>
            <person name="Hunkapiller M.W."/>
            <person name="Myers E.W."/>
            <person name="Venter J.C."/>
        </authorList>
    </citation>
    <scope>NUCLEOTIDE SEQUENCE [LARGE SCALE GENOMIC DNA]</scope>
    <scope>VARIANT ARG-141</scope>
</reference>
<reference key="3">
    <citation type="journal article" date="2004" name="Genome Res.">
        <title>The status, quality, and expansion of the NIH full-length cDNA project: the Mammalian Gene Collection (MGC).</title>
        <authorList>
            <consortium name="The MGC Project Team"/>
        </authorList>
    </citation>
    <scope>NUCLEOTIDE SEQUENCE [LARGE SCALE MRNA]</scope>
    <scope>VARIANT ARG-141</scope>
</reference>
<reference key="4">
    <citation type="journal article" date="2002" name="Genomics">
        <title>DEFOG: a practical scheme for deciphering families of genes.</title>
        <authorList>
            <person name="Fuchs T."/>
            <person name="Malecova B."/>
            <person name="Linhart C."/>
            <person name="Sharan R."/>
            <person name="Khen M."/>
            <person name="Herwig R."/>
            <person name="Shmulevich D."/>
            <person name="Elkon R."/>
            <person name="Steinfath M."/>
            <person name="O'Brien J.K."/>
            <person name="Radelof U."/>
            <person name="Lehrach H."/>
            <person name="Lancet D."/>
            <person name="Shamir R."/>
        </authorList>
    </citation>
    <scope>NUCLEOTIDE SEQUENCE [GENOMIC DNA] OF 66-281</scope>
</reference>
<reference key="5">
    <citation type="journal article" date="2004" name="Proc. Natl. Acad. Sci. U.S.A.">
        <title>The human olfactory receptor gene family.</title>
        <authorList>
            <person name="Malnic B."/>
            <person name="Godfrey P.A."/>
            <person name="Buck L.B."/>
        </authorList>
    </citation>
    <scope>IDENTIFICATION</scope>
</reference>
<reference key="6">
    <citation type="journal article" date="2004" name="Proc. Natl. Acad. Sci. U.S.A.">
        <authorList>
            <person name="Malnic B."/>
            <person name="Godfrey P.A."/>
            <person name="Buck L.B."/>
        </authorList>
    </citation>
    <scope>ERRATUM OF PUBMED:14983052</scope>
</reference>
<keyword id="KW-1003">Cell membrane</keyword>
<keyword id="KW-1015">Disulfide bond</keyword>
<keyword id="KW-0297">G-protein coupled receptor</keyword>
<keyword id="KW-0325">Glycoprotein</keyword>
<keyword id="KW-0472">Membrane</keyword>
<keyword id="KW-0552">Olfaction</keyword>
<keyword id="KW-0675">Receptor</keyword>
<keyword id="KW-1185">Reference proteome</keyword>
<keyword id="KW-0716">Sensory transduction</keyword>
<keyword id="KW-0807">Transducer</keyword>
<keyword id="KW-0812">Transmembrane</keyword>
<keyword id="KW-1133">Transmembrane helix</keyword>
<sequence>MENNTEVTEFILVGLTDDPELQIPLFIVFLFIYLITLVGNLGMIELILLDSCLHTPMYFFLSNLSLVDFGYSSAVTPKVMVGFLTGDKFILYNACATQFFFFVAFITAESFLLASMAYDRYAALCKPLHYTTTMTTNVCACLAIGSYICGFLNASIHTGNTFRLSFCRSNVVEHFFCDAPPLLTLSCSDNYISEMVIFFVVGFNDLFSILVILISYLFIFITIMKMRSPEGRQKAFSTCASHLTAVSIFYGTGIFMYLRPNSSHFMGTDKMASVFYAIVIPMLNPLVYSLRNKEVKSAFKKTVGKAKASIGFIF</sequence>
<organism>
    <name type="scientific">Homo sapiens</name>
    <name type="common">Human</name>
    <dbReference type="NCBI Taxonomy" id="9606"/>
    <lineage>
        <taxon>Eukaryota</taxon>
        <taxon>Metazoa</taxon>
        <taxon>Chordata</taxon>
        <taxon>Craniata</taxon>
        <taxon>Vertebrata</taxon>
        <taxon>Euteleostomi</taxon>
        <taxon>Mammalia</taxon>
        <taxon>Eutheria</taxon>
        <taxon>Euarchontoglires</taxon>
        <taxon>Primates</taxon>
        <taxon>Haplorrhini</taxon>
        <taxon>Catarrhini</taxon>
        <taxon>Hominidae</taxon>
        <taxon>Homo</taxon>
    </lineage>
</organism>
<dbReference type="EMBL" id="AB065851">
    <property type="protein sequence ID" value="BAC06069.1"/>
    <property type="molecule type" value="Genomic_DNA"/>
</dbReference>
<dbReference type="EMBL" id="CH471076">
    <property type="protein sequence ID" value="EAW73806.1"/>
    <property type="molecule type" value="Genomic_DNA"/>
</dbReference>
<dbReference type="EMBL" id="BC136947">
    <property type="protein sequence ID" value="AAI36948.1"/>
    <property type="molecule type" value="mRNA"/>
</dbReference>
<dbReference type="EMBL" id="BC136948">
    <property type="protein sequence ID" value="AAI36949.1"/>
    <property type="molecule type" value="mRNA"/>
</dbReference>
<dbReference type="EMBL" id="AF399637">
    <property type="protein sequence ID" value="AAK95122.1"/>
    <property type="molecule type" value="Genomic_DNA"/>
</dbReference>
<dbReference type="EMBL" id="BK004507">
    <property type="protein sequence ID" value="DAA04905.1"/>
    <property type="molecule type" value="Genomic_DNA"/>
</dbReference>
<dbReference type="CCDS" id="CCDS31551.1"/>
<dbReference type="RefSeq" id="NP_001004733.1">
    <property type="nucleotide sequence ID" value="NM_001004733.3"/>
</dbReference>
<dbReference type="SMR" id="Q96R08"/>
<dbReference type="FunCoup" id="Q96R08">
    <property type="interactions" value="417"/>
</dbReference>
<dbReference type="STRING" id="9606.ENSP00000493263"/>
<dbReference type="GlyCosmos" id="Q96R08">
    <property type="glycosylation" value="2 sites, No reported glycans"/>
</dbReference>
<dbReference type="GlyGen" id="Q96R08">
    <property type="glycosylation" value="2 sites"/>
</dbReference>
<dbReference type="iPTMnet" id="Q96R08"/>
<dbReference type="PhosphoSitePlus" id="Q96R08"/>
<dbReference type="BioMuta" id="OR5B12"/>
<dbReference type="DMDM" id="20532192"/>
<dbReference type="PaxDb" id="9606-ENSP00000306657"/>
<dbReference type="PeptideAtlas" id="Q96R08"/>
<dbReference type="Antibodypedia" id="58770">
    <property type="antibodies" value="166 antibodies from 21 providers"/>
</dbReference>
<dbReference type="DNASU" id="390191"/>
<dbReference type="Ensembl" id="ENST00000302572.2">
    <property type="protein sequence ID" value="ENSP00000306657.2"/>
    <property type="gene ID" value="ENSG00000172362.4"/>
</dbReference>
<dbReference type="Ensembl" id="ENST00000641921.2">
    <property type="protein sequence ID" value="ENSP00000493263.1"/>
    <property type="gene ID" value="ENSG00000172362.4"/>
</dbReference>
<dbReference type="GeneID" id="390191"/>
<dbReference type="KEGG" id="hsa:390191"/>
<dbReference type="MANE-Select" id="ENST00000641921.2">
    <property type="protein sequence ID" value="ENSP00000493263.1"/>
    <property type="RefSeq nucleotide sequence ID" value="NM_001004733.3"/>
    <property type="RefSeq protein sequence ID" value="NP_001004733.1"/>
</dbReference>
<dbReference type="UCSC" id="uc010rkh.2">
    <property type="organism name" value="human"/>
</dbReference>
<dbReference type="AGR" id="HGNC:15432"/>
<dbReference type="CTD" id="390191"/>
<dbReference type="DisGeNET" id="390191"/>
<dbReference type="GeneCards" id="OR5B12"/>
<dbReference type="HGNC" id="HGNC:15432">
    <property type="gene designation" value="OR5B12"/>
</dbReference>
<dbReference type="HPA" id="ENSG00000172362">
    <property type="expression patterns" value="Not detected"/>
</dbReference>
<dbReference type="neXtProt" id="NX_Q96R08"/>
<dbReference type="PharmGKB" id="PA32481"/>
<dbReference type="VEuPathDB" id="HostDB:ENSG00000172362"/>
<dbReference type="eggNOG" id="ENOG502SHXT">
    <property type="taxonomic scope" value="Eukaryota"/>
</dbReference>
<dbReference type="GeneTree" id="ENSGT01120000271832"/>
<dbReference type="HOGENOM" id="CLU_012526_1_0_1"/>
<dbReference type="InParanoid" id="Q96R08"/>
<dbReference type="OMA" id="MGCYVCG"/>
<dbReference type="OrthoDB" id="9444602at2759"/>
<dbReference type="PAN-GO" id="Q96R08">
    <property type="GO annotations" value="4 GO annotations based on evolutionary models"/>
</dbReference>
<dbReference type="PhylomeDB" id="Q96R08"/>
<dbReference type="TreeFam" id="TF352753"/>
<dbReference type="PathwayCommons" id="Q96R08"/>
<dbReference type="Reactome" id="R-HSA-9752946">
    <property type="pathway name" value="Expression and translocation of olfactory receptors"/>
</dbReference>
<dbReference type="BioGRID-ORCS" id="390191">
    <property type="hits" value="8 hits in 736 CRISPR screens"/>
</dbReference>
<dbReference type="GeneWiki" id="OR5B12"/>
<dbReference type="GenomeRNAi" id="390191"/>
<dbReference type="Pharos" id="Q96R08">
    <property type="development level" value="Tdark"/>
</dbReference>
<dbReference type="PRO" id="PR:Q96R08"/>
<dbReference type="Proteomes" id="UP000005640">
    <property type="component" value="Chromosome 11"/>
</dbReference>
<dbReference type="RNAct" id="Q96R08">
    <property type="molecule type" value="protein"/>
</dbReference>
<dbReference type="Bgee" id="ENSG00000172362">
    <property type="expression patterns" value="Expressed in male germ line stem cell (sensu Vertebrata) in testis and 7 other cell types or tissues"/>
</dbReference>
<dbReference type="GO" id="GO:0005886">
    <property type="term" value="C:plasma membrane"/>
    <property type="evidence" value="ECO:0007669"/>
    <property type="project" value="UniProtKB-SubCell"/>
</dbReference>
<dbReference type="GO" id="GO:0004930">
    <property type="term" value="F:G protein-coupled receptor activity"/>
    <property type="evidence" value="ECO:0007669"/>
    <property type="project" value="UniProtKB-KW"/>
</dbReference>
<dbReference type="GO" id="GO:0005549">
    <property type="term" value="F:odorant binding"/>
    <property type="evidence" value="ECO:0000318"/>
    <property type="project" value="GO_Central"/>
</dbReference>
<dbReference type="GO" id="GO:0004984">
    <property type="term" value="F:olfactory receptor activity"/>
    <property type="evidence" value="ECO:0000318"/>
    <property type="project" value="GO_Central"/>
</dbReference>
<dbReference type="GO" id="GO:0007186">
    <property type="term" value="P:G protein-coupled receptor signaling pathway"/>
    <property type="evidence" value="ECO:0000318"/>
    <property type="project" value="GO_Central"/>
</dbReference>
<dbReference type="GO" id="GO:0007608">
    <property type="term" value="P:sensory perception of smell"/>
    <property type="evidence" value="ECO:0000318"/>
    <property type="project" value="GO_Central"/>
</dbReference>
<dbReference type="CDD" id="cd15407">
    <property type="entry name" value="7tmA_OR5B-like"/>
    <property type="match status" value="1"/>
</dbReference>
<dbReference type="FunFam" id="1.20.1070.10:FF:000003">
    <property type="entry name" value="Olfactory receptor"/>
    <property type="match status" value="1"/>
</dbReference>
<dbReference type="Gene3D" id="1.20.1070.10">
    <property type="entry name" value="Rhodopsin 7-helix transmembrane proteins"/>
    <property type="match status" value="1"/>
</dbReference>
<dbReference type="InterPro" id="IPR000276">
    <property type="entry name" value="GPCR_Rhodpsn"/>
</dbReference>
<dbReference type="InterPro" id="IPR017452">
    <property type="entry name" value="GPCR_Rhodpsn_7TM"/>
</dbReference>
<dbReference type="InterPro" id="IPR000725">
    <property type="entry name" value="Olfact_rcpt"/>
</dbReference>
<dbReference type="PANTHER" id="PTHR48018">
    <property type="entry name" value="OLFACTORY RECEPTOR"/>
    <property type="match status" value="1"/>
</dbReference>
<dbReference type="Pfam" id="PF13853">
    <property type="entry name" value="7tm_4"/>
    <property type="match status" value="1"/>
</dbReference>
<dbReference type="PRINTS" id="PR00237">
    <property type="entry name" value="GPCRRHODOPSN"/>
</dbReference>
<dbReference type="PRINTS" id="PR00245">
    <property type="entry name" value="OLFACTORYR"/>
</dbReference>
<dbReference type="SUPFAM" id="SSF81321">
    <property type="entry name" value="Family A G protein-coupled receptor-like"/>
    <property type="match status" value="1"/>
</dbReference>
<dbReference type="PROSITE" id="PS00237">
    <property type="entry name" value="G_PROTEIN_RECEP_F1_1"/>
    <property type="match status" value="1"/>
</dbReference>
<dbReference type="PROSITE" id="PS50262">
    <property type="entry name" value="G_PROTEIN_RECEP_F1_2"/>
    <property type="match status" value="1"/>
</dbReference>
<accession>Q96R08</accession>
<accession>B2RNL2</accession>
<accession>Q6IEV5</accession>
<proteinExistence type="evidence at transcript level"/>
<feature type="chain" id="PRO_0000150587" description="Olfactory receptor 5B12">
    <location>
        <begin position="1"/>
        <end position="314"/>
    </location>
</feature>
<feature type="topological domain" description="Extracellular" evidence="1">
    <location>
        <begin position="1"/>
        <end position="23"/>
    </location>
</feature>
<feature type="transmembrane region" description="Helical; Name=1" evidence="1">
    <location>
        <begin position="24"/>
        <end position="44"/>
    </location>
</feature>
<feature type="topological domain" description="Cytoplasmic" evidence="1">
    <location>
        <begin position="45"/>
        <end position="52"/>
    </location>
</feature>
<feature type="transmembrane region" description="Helical; Name=2" evidence="1">
    <location>
        <begin position="53"/>
        <end position="73"/>
    </location>
</feature>
<feature type="topological domain" description="Extracellular" evidence="1">
    <location>
        <begin position="74"/>
        <end position="97"/>
    </location>
</feature>
<feature type="transmembrane region" description="Helical; Name=3" evidence="1">
    <location>
        <begin position="98"/>
        <end position="118"/>
    </location>
</feature>
<feature type="topological domain" description="Cytoplasmic" evidence="1">
    <location>
        <begin position="119"/>
        <end position="137"/>
    </location>
</feature>
<feature type="transmembrane region" description="Helical; Name=4" evidence="1">
    <location>
        <begin position="138"/>
        <end position="158"/>
    </location>
</feature>
<feature type="topological domain" description="Extracellular" evidence="1">
    <location>
        <begin position="159"/>
        <end position="194"/>
    </location>
</feature>
<feature type="transmembrane region" description="Helical; Name=5" evidence="1">
    <location>
        <begin position="195"/>
        <end position="215"/>
    </location>
</feature>
<feature type="topological domain" description="Cytoplasmic" evidence="1">
    <location>
        <begin position="216"/>
        <end position="235"/>
    </location>
</feature>
<feature type="transmembrane region" description="Helical; Name=6" evidence="1">
    <location>
        <begin position="236"/>
        <end position="256"/>
    </location>
</feature>
<feature type="topological domain" description="Extracellular" evidence="1">
    <location>
        <begin position="257"/>
        <end position="269"/>
    </location>
</feature>
<feature type="transmembrane region" description="Helical; Name=7" evidence="1">
    <location>
        <begin position="270"/>
        <end position="290"/>
    </location>
</feature>
<feature type="topological domain" description="Cytoplasmic" evidence="1">
    <location>
        <begin position="291"/>
        <end position="314"/>
    </location>
</feature>
<feature type="glycosylation site" description="N-linked (GlcNAc...) asparagine" evidence="1">
    <location>
        <position position="3"/>
    </location>
</feature>
<feature type="glycosylation site" description="N-linked (GlcNAc...) asparagine" evidence="1">
    <location>
        <position position="261"/>
    </location>
</feature>
<feature type="disulfide bond" evidence="2">
    <location>
        <begin position="95"/>
        <end position="187"/>
    </location>
</feature>
<feature type="sequence variant" id="VAR_053191" description="In dbSNP:rs4938895." evidence="3 4">
    <original>C</original>
    <variation>R</variation>
    <location>
        <position position="141"/>
    </location>
</feature>
<feature type="sequence variant" id="VAR_053192" description="In dbSNP:rs11229457.">
    <original>C</original>
    <variation>Y</variation>
    <location>
        <position position="141"/>
    </location>
</feature>
<gene>
    <name type="primary">OR5B12</name>
    <name type="synonym">OR5B12P</name>
    <name type="synonym">OR5B16</name>
</gene>
<name>OR5BC_HUMAN</name>
<protein>
    <recommendedName>
        <fullName>Olfactory receptor 5B12</fullName>
    </recommendedName>
    <alternativeName>
        <fullName>Olfactory receptor 5B16</fullName>
    </alternativeName>
    <alternativeName>
        <fullName>Olfactory receptor OR11-241</fullName>
    </alternativeName>
</protein>